<feature type="chain" id="PRO_0000124136" description="Proteasome subunit alpha type-6-B">
    <location>
        <begin position="1"/>
        <end position="246"/>
    </location>
</feature>
<keyword id="KW-0025">Alternative splicing</keyword>
<keyword id="KW-0963">Cytoplasm</keyword>
<keyword id="KW-0539">Nucleus</keyword>
<keyword id="KW-0647">Proteasome</keyword>
<keyword id="KW-1185">Reference proteome</keyword>
<accession>O81147</accession>
<dbReference type="EMBL" id="AF043519">
    <property type="protein sequence ID" value="AAC32055.1"/>
    <property type="molecule type" value="mRNA"/>
</dbReference>
<dbReference type="EMBL" id="AC005970">
    <property type="protein sequence ID" value="AAC95161.1"/>
    <property type="molecule type" value="Genomic_DNA"/>
</dbReference>
<dbReference type="EMBL" id="CP002685">
    <property type="protein sequence ID" value="AEC05979.1"/>
    <property type="molecule type" value="Genomic_DNA"/>
</dbReference>
<dbReference type="EMBL" id="AY052679">
    <property type="protein sequence ID" value="AAK96583.1"/>
    <property type="molecule type" value="mRNA"/>
</dbReference>
<dbReference type="EMBL" id="AY143829">
    <property type="protein sequence ID" value="AAN28768.1"/>
    <property type="molecule type" value="mRNA"/>
</dbReference>
<dbReference type="PIR" id="T51967">
    <property type="entry name" value="T51967"/>
</dbReference>
<dbReference type="RefSeq" id="NP_178641.1">
    <molecule id="O81147-1"/>
    <property type="nucleotide sequence ID" value="NM_126597.4"/>
</dbReference>
<dbReference type="SMR" id="O81147"/>
<dbReference type="BioGRID" id="534">
    <property type="interactions" value="76"/>
</dbReference>
<dbReference type="FunCoup" id="O81147">
    <property type="interactions" value="4152"/>
</dbReference>
<dbReference type="IntAct" id="O81147">
    <property type="interactions" value="4"/>
</dbReference>
<dbReference type="STRING" id="3702.O81147"/>
<dbReference type="MetOSite" id="O81147"/>
<dbReference type="PaxDb" id="3702-AT2G05840.1"/>
<dbReference type="ProteomicsDB" id="226487">
    <molecule id="O81147-1"/>
</dbReference>
<dbReference type="EnsemblPlants" id="AT2G05840.1">
    <molecule id="O81147-1"/>
    <property type="protein sequence ID" value="AT2G05840.1"/>
    <property type="gene ID" value="AT2G05840"/>
</dbReference>
<dbReference type="GeneID" id="815135"/>
<dbReference type="Gramene" id="AT2G05840.1">
    <molecule id="O81147-1"/>
    <property type="protein sequence ID" value="AT2G05840.1"/>
    <property type="gene ID" value="AT2G05840"/>
</dbReference>
<dbReference type="KEGG" id="ath:AT2G05840"/>
<dbReference type="Araport" id="AT2G05840"/>
<dbReference type="TAIR" id="AT2G05840">
    <property type="gene designation" value="PAA2"/>
</dbReference>
<dbReference type="eggNOG" id="KOG0182">
    <property type="taxonomic scope" value="Eukaryota"/>
</dbReference>
<dbReference type="HOGENOM" id="CLU_035750_4_1_1"/>
<dbReference type="InParanoid" id="O81147"/>
<dbReference type="OMA" id="YGYDMPV"/>
<dbReference type="OrthoDB" id="939142at2759"/>
<dbReference type="PhylomeDB" id="O81147"/>
<dbReference type="CD-CODE" id="4299E36E">
    <property type="entry name" value="Nucleolus"/>
</dbReference>
<dbReference type="PRO" id="PR:O81147"/>
<dbReference type="Proteomes" id="UP000006548">
    <property type="component" value="Chromosome 2"/>
</dbReference>
<dbReference type="ExpressionAtlas" id="O81147">
    <property type="expression patterns" value="baseline and differential"/>
</dbReference>
<dbReference type="GO" id="GO:0005829">
    <property type="term" value="C:cytosol"/>
    <property type="evidence" value="ECO:0007005"/>
    <property type="project" value="TAIR"/>
</dbReference>
<dbReference type="GO" id="GO:0022626">
    <property type="term" value="C:cytosolic ribosome"/>
    <property type="evidence" value="ECO:0007005"/>
    <property type="project" value="TAIR"/>
</dbReference>
<dbReference type="GO" id="GO:0005739">
    <property type="term" value="C:mitochondrion"/>
    <property type="evidence" value="ECO:0007005"/>
    <property type="project" value="TAIR"/>
</dbReference>
<dbReference type="GO" id="GO:0005634">
    <property type="term" value="C:nucleus"/>
    <property type="evidence" value="ECO:0007669"/>
    <property type="project" value="UniProtKB-SubCell"/>
</dbReference>
<dbReference type="GO" id="GO:0000502">
    <property type="term" value="C:proteasome complex"/>
    <property type="evidence" value="ECO:0000314"/>
    <property type="project" value="TAIR"/>
</dbReference>
<dbReference type="GO" id="GO:0019773">
    <property type="term" value="C:proteasome core complex, alpha-subunit complex"/>
    <property type="evidence" value="ECO:0000250"/>
    <property type="project" value="UniProtKB"/>
</dbReference>
<dbReference type="GO" id="GO:0003735">
    <property type="term" value="F:structural constituent of ribosome"/>
    <property type="evidence" value="ECO:0000314"/>
    <property type="project" value="CAFA"/>
</dbReference>
<dbReference type="GO" id="GO:0006511">
    <property type="term" value="P:ubiquitin-dependent protein catabolic process"/>
    <property type="evidence" value="ECO:0007669"/>
    <property type="project" value="InterPro"/>
</dbReference>
<dbReference type="CDD" id="cd03754">
    <property type="entry name" value="proteasome_alpha_type_6"/>
    <property type="match status" value="1"/>
</dbReference>
<dbReference type="FunFam" id="3.60.20.10:FF:000036">
    <property type="entry name" value="Proteasome subunit alpha type"/>
    <property type="match status" value="1"/>
</dbReference>
<dbReference type="Gene3D" id="3.60.20.10">
    <property type="entry name" value="Glutamine Phosphoribosylpyrophosphate, subunit 1, domain 1"/>
    <property type="match status" value="1"/>
</dbReference>
<dbReference type="InterPro" id="IPR029055">
    <property type="entry name" value="Ntn_hydrolases_N"/>
</dbReference>
<dbReference type="InterPro" id="IPR050115">
    <property type="entry name" value="Proteasome_alpha"/>
</dbReference>
<dbReference type="InterPro" id="IPR023332">
    <property type="entry name" value="Proteasome_alpha-type"/>
</dbReference>
<dbReference type="InterPro" id="IPR000426">
    <property type="entry name" value="Proteasome_asu_N"/>
</dbReference>
<dbReference type="InterPro" id="IPR001353">
    <property type="entry name" value="Proteasome_sua/b"/>
</dbReference>
<dbReference type="InterPro" id="IPR034642">
    <property type="entry name" value="Proteasome_subunit_alpha6"/>
</dbReference>
<dbReference type="NCBIfam" id="NF003075">
    <property type="entry name" value="PRK03996.1"/>
    <property type="match status" value="1"/>
</dbReference>
<dbReference type="PANTHER" id="PTHR11599">
    <property type="entry name" value="PROTEASOME SUBUNIT ALPHA/BETA"/>
    <property type="match status" value="1"/>
</dbReference>
<dbReference type="Pfam" id="PF00227">
    <property type="entry name" value="Proteasome"/>
    <property type="match status" value="1"/>
</dbReference>
<dbReference type="Pfam" id="PF10584">
    <property type="entry name" value="Proteasome_A_N"/>
    <property type="match status" value="1"/>
</dbReference>
<dbReference type="SMART" id="SM00948">
    <property type="entry name" value="Proteasome_A_N"/>
    <property type="match status" value="1"/>
</dbReference>
<dbReference type="SUPFAM" id="SSF56235">
    <property type="entry name" value="N-terminal nucleophile aminohydrolases (Ntn hydrolases)"/>
    <property type="match status" value="1"/>
</dbReference>
<dbReference type="PROSITE" id="PS00388">
    <property type="entry name" value="PROTEASOME_ALPHA_1"/>
    <property type="match status" value="1"/>
</dbReference>
<dbReference type="PROSITE" id="PS51475">
    <property type="entry name" value="PROTEASOME_ALPHA_2"/>
    <property type="match status" value="1"/>
</dbReference>
<proteinExistence type="evidence at protein level"/>
<organism>
    <name type="scientific">Arabidopsis thaliana</name>
    <name type="common">Mouse-ear cress</name>
    <dbReference type="NCBI Taxonomy" id="3702"/>
    <lineage>
        <taxon>Eukaryota</taxon>
        <taxon>Viridiplantae</taxon>
        <taxon>Streptophyta</taxon>
        <taxon>Embryophyta</taxon>
        <taxon>Tracheophyta</taxon>
        <taxon>Spermatophyta</taxon>
        <taxon>Magnoliopsida</taxon>
        <taxon>eudicotyledons</taxon>
        <taxon>Gunneridae</taxon>
        <taxon>Pentapetalae</taxon>
        <taxon>rosids</taxon>
        <taxon>malvids</taxon>
        <taxon>Brassicales</taxon>
        <taxon>Brassicaceae</taxon>
        <taxon>Camelineae</taxon>
        <taxon>Arabidopsis</taxon>
    </lineage>
</organism>
<comment type="function">
    <text>The proteasome is a multicatalytic proteinase complex which is characterized by its ability to cleave peptides with Arg, Phe, Tyr, Leu, and Glu adjacent to the leaving group at neutral or slightly basic pH. The proteasome has an ATP-dependent proteolytic activity.</text>
</comment>
<comment type="subunit">
    <text evidence="3 4 5">Component of the 20S core complex of the 26S proteasome. The 26S proteasome is composed of a core protease (CP), known as the 20S proteasome, capped at one or both ends by the 19S regulatory particle (RP/PA700). The 20S proteasome core is composed of 28 subunits that are arranged in four stacked rings, resulting in a barrel-shaped structure. The two end rings are each formed by seven alpha subunits, and the two central rings are each formed by seven beta subunits. The catalytic chamber with the active sites is on the inside of the barrel.</text>
</comment>
<comment type="subcellular location">
    <subcellularLocation>
        <location evidence="1">Cytoplasm</location>
    </subcellularLocation>
    <subcellularLocation>
        <location evidence="1">Nucleus</location>
    </subcellularLocation>
</comment>
<comment type="alternative products">
    <event type="alternative splicing"/>
    <isoform>
        <id>O81147-1</id>
        <name>1</name>
        <sequence type="displayed"/>
    </isoform>
    <text>A number of isoforms are produced. According to EST sequences.</text>
</comment>
<comment type="similarity">
    <text evidence="2">Belongs to the peptidase T1A family.</text>
</comment>
<sequence length="246" mass="27350">MSRGSGAGYDRHITIFSPEGRLFQVEYAFKAVKAAGITSIGVRGKDSVCVVTQKKVPDKLLDQSSVSHLFPVTKYLGLLATGMTADSRSLVQQARNEAAEFRFQYGYEMPADILAKWIADKSQVYTQHAYMRPLGVVAMVLGIDEERGPLLYKCDPAGHFYGHKATSAGMKEQEAVNFLEKKMKENPAFTYDETVQTAISALQSVLQEDFKATEIEVGVVRADDPLFRSLRTEEIDEHLTAISERD</sequence>
<protein>
    <recommendedName>
        <fullName>Proteasome subunit alpha type-6-B</fullName>
    </recommendedName>
    <alternativeName>
        <fullName>20S proteasome subunit alpha A-2</fullName>
    </alternativeName>
    <alternativeName>
        <fullName>Proteasome subunit alpha type-1</fullName>
    </alternativeName>
</protein>
<name>PSA6B_ARATH</name>
<evidence type="ECO:0000250" key="1"/>
<evidence type="ECO:0000255" key="2">
    <source>
        <dbReference type="PROSITE-ProRule" id="PRU00808"/>
    </source>
</evidence>
<evidence type="ECO:0000269" key="3">
    <source>
    </source>
</evidence>
<evidence type="ECO:0000269" key="4">
    <source>
    </source>
</evidence>
<evidence type="ECO:0000269" key="5">
    <source>
    </source>
</evidence>
<reference key="1">
    <citation type="journal article" date="1998" name="Genetics">
        <title>Molecular organization of the 20S proteasome gene family from Arabidopsis thaliana.</title>
        <authorList>
            <person name="Fu H."/>
            <person name="Doelling J.H."/>
            <person name="Arendt C.S."/>
            <person name="Hochstrasser M."/>
            <person name="Vierstra R.D."/>
        </authorList>
    </citation>
    <scope>NUCLEOTIDE SEQUENCE [MRNA]</scope>
    <scope>GENE FAMILY</scope>
    <scope>NOMENCLATURE</scope>
    <source>
        <strain>cv. Columbia</strain>
    </source>
</reference>
<reference key="2">
    <citation type="journal article" date="1999" name="Nature">
        <title>Sequence and analysis of chromosome 2 of the plant Arabidopsis thaliana.</title>
        <authorList>
            <person name="Lin X."/>
            <person name="Kaul S."/>
            <person name="Rounsley S.D."/>
            <person name="Shea T.P."/>
            <person name="Benito M.-I."/>
            <person name="Town C.D."/>
            <person name="Fujii C.Y."/>
            <person name="Mason T.M."/>
            <person name="Bowman C.L."/>
            <person name="Barnstead M.E."/>
            <person name="Feldblyum T.V."/>
            <person name="Buell C.R."/>
            <person name="Ketchum K.A."/>
            <person name="Lee J.J."/>
            <person name="Ronning C.M."/>
            <person name="Koo H.L."/>
            <person name="Moffat K.S."/>
            <person name="Cronin L.A."/>
            <person name="Shen M."/>
            <person name="Pai G."/>
            <person name="Van Aken S."/>
            <person name="Umayam L."/>
            <person name="Tallon L.J."/>
            <person name="Gill J.E."/>
            <person name="Adams M.D."/>
            <person name="Carrera A.J."/>
            <person name="Creasy T.H."/>
            <person name="Goodman H.M."/>
            <person name="Somerville C.R."/>
            <person name="Copenhaver G.P."/>
            <person name="Preuss D."/>
            <person name="Nierman W.C."/>
            <person name="White O."/>
            <person name="Eisen J.A."/>
            <person name="Salzberg S.L."/>
            <person name="Fraser C.M."/>
            <person name="Venter J.C."/>
        </authorList>
    </citation>
    <scope>NUCLEOTIDE SEQUENCE [LARGE SCALE GENOMIC DNA]</scope>
    <source>
        <strain>cv. Columbia</strain>
    </source>
</reference>
<reference key="3">
    <citation type="journal article" date="2017" name="Plant J.">
        <title>Araport11: a complete reannotation of the Arabidopsis thaliana reference genome.</title>
        <authorList>
            <person name="Cheng C.Y."/>
            <person name="Krishnakumar V."/>
            <person name="Chan A.P."/>
            <person name="Thibaud-Nissen F."/>
            <person name="Schobel S."/>
            <person name="Town C.D."/>
        </authorList>
    </citation>
    <scope>GENOME REANNOTATION</scope>
    <source>
        <strain>cv. Columbia</strain>
    </source>
</reference>
<reference key="4">
    <citation type="journal article" date="2003" name="Science">
        <title>Empirical analysis of transcriptional activity in the Arabidopsis genome.</title>
        <authorList>
            <person name="Yamada K."/>
            <person name="Lim J."/>
            <person name="Dale J.M."/>
            <person name="Chen H."/>
            <person name="Shinn P."/>
            <person name="Palm C.J."/>
            <person name="Southwick A.M."/>
            <person name="Wu H.C."/>
            <person name="Kim C.J."/>
            <person name="Nguyen M."/>
            <person name="Pham P.K."/>
            <person name="Cheuk R.F."/>
            <person name="Karlin-Newmann G."/>
            <person name="Liu S.X."/>
            <person name="Lam B."/>
            <person name="Sakano H."/>
            <person name="Wu T."/>
            <person name="Yu G."/>
            <person name="Miranda M."/>
            <person name="Quach H.L."/>
            <person name="Tripp M."/>
            <person name="Chang C.H."/>
            <person name="Lee J.M."/>
            <person name="Toriumi M.J."/>
            <person name="Chan M.M."/>
            <person name="Tang C.C."/>
            <person name="Onodera C.S."/>
            <person name="Deng J.M."/>
            <person name="Akiyama K."/>
            <person name="Ansari Y."/>
            <person name="Arakawa T."/>
            <person name="Banh J."/>
            <person name="Banno F."/>
            <person name="Bowser L."/>
            <person name="Brooks S.Y."/>
            <person name="Carninci P."/>
            <person name="Chao Q."/>
            <person name="Choy N."/>
            <person name="Enju A."/>
            <person name="Goldsmith A.D."/>
            <person name="Gurjal M."/>
            <person name="Hansen N.F."/>
            <person name="Hayashizaki Y."/>
            <person name="Johnson-Hopson C."/>
            <person name="Hsuan V.W."/>
            <person name="Iida K."/>
            <person name="Karnes M."/>
            <person name="Khan S."/>
            <person name="Koesema E."/>
            <person name="Ishida J."/>
            <person name="Jiang P.X."/>
            <person name="Jones T."/>
            <person name="Kawai J."/>
            <person name="Kamiya A."/>
            <person name="Meyers C."/>
            <person name="Nakajima M."/>
            <person name="Narusaka M."/>
            <person name="Seki M."/>
            <person name="Sakurai T."/>
            <person name="Satou M."/>
            <person name="Tamse R."/>
            <person name="Vaysberg M."/>
            <person name="Wallender E.K."/>
            <person name="Wong C."/>
            <person name="Yamamura Y."/>
            <person name="Yuan S."/>
            <person name="Shinozaki K."/>
            <person name="Davis R.W."/>
            <person name="Theologis A."/>
            <person name="Ecker J.R."/>
        </authorList>
    </citation>
    <scope>NUCLEOTIDE SEQUENCE [LARGE SCALE MRNA]</scope>
    <source>
        <strain>cv. Columbia</strain>
    </source>
</reference>
<reference key="5">
    <citation type="journal article" date="1999" name="Mol. Biol. Rep.">
        <title>Structure and functional analyses of the 26S proteasome subunits from plants.</title>
        <authorList>
            <person name="Fu H."/>
            <person name="Girod P.-A."/>
            <person name="Doelling J.H."/>
            <person name="van Nocker S."/>
            <person name="Hochstrasser M."/>
            <person name="Finley D."/>
            <person name="Vierstra R.D."/>
        </authorList>
    </citation>
    <scope>SUBUNIT</scope>
</reference>
<reference key="6">
    <citation type="journal article" date="2004" name="J. Biol. Chem.">
        <title>Purification of the Arabidopsis 26 S proteasome: biochemical and molecular analyses revealed the presence of multiple isoforms.</title>
        <authorList>
            <person name="Yang P."/>
            <person name="Fu H."/>
            <person name="Walker J."/>
            <person name="Papa C.M."/>
            <person name="Smalle J."/>
            <person name="Ju Y.-M."/>
            <person name="Vierstra R.D."/>
        </authorList>
    </citation>
    <scope>SUBUNIT</scope>
    <scope>IDENTIFICATION BY MASS SPECTROMETRY</scope>
</reference>
<reference key="7">
    <citation type="journal article" date="2010" name="J. Biol. Chem.">
        <title>Affinity purification of the Arabidopsis 26 S proteasome reveals a diverse array of plant proteolytic complexes.</title>
        <authorList>
            <person name="Book A.J."/>
            <person name="Gladman N.P."/>
            <person name="Lee S.S."/>
            <person name="Scalf M."/>
            <person name="Smith L.M."/>
            <person name="Vierstra R.D."/>
        </authorList>
    </citation>
    <scope>IDENTIFICATION BY MASS SPECTROMETRY</scope>
    <scope>CHARACTERIZATION OF THE 26S PROTEASOME COMPLEX</scope>
    <scope>SUBUNIT</scope>
</reference>
<gene>
    <name type="primary">PAA2</name>
    <name type="ordered locus">At2g05840</name>
    <name type="ORF">T6P5.4</name>
</gene>